<organism>
    <name type="scientific">Xanthomonas campestris pv. campestris (strain B100)</name>
    <dbReference type="NCBI Taxonomy" id="509169"/>
    <lineage>
        <taxon>Bacteria</taxon>
        <taxon>Pseudomonadati</taxon>
        <taxon>Pseudomonadota</taxon>
        <taxon>Gammaproteobacteria</taxon>
        <taxon>Lysobacterales</taxon>
        <taxon>Lysobacteraceae</taxon>
        <taxon>Xanthomonas</taxon>
    </lineage>
</organism>
<sequence length="130" mass="13915">MAKPAEKKTKKKIKRVITDGVAHVHASFNNTIVTITDRQGNALSWATSGGAGFRGSRKSTPFAAQVAAEKAGRAALDYGVKSLEVRIKGPGPGRESAVRSLNNVGYKITNIIDVTPIPHNGCRPPKKRRV</sequence>
<reference key="1">
    <citation type="journal article" date="2008" name="J. Biotechnol.">
        <title>The genome of Xanthomonas campestris pv. campestris B100 and its use for the reconstruction of metabolic pathways involved in xanthan biosynthesis.</title>
        <authorList>
            <person name="Vorhoelter F.-J."/>
            <person name="Schneiker S."/>
            <person name="Goesmann A."/>
            <person name="Krause L."/>
            <person name="Bekel T."/>
            <person name="Kaiser O."/>
            <person name="Linke B."/>
            <person name="Patschkowski T."/>
            <person name="Rueckert C."/>
            <person name="Schmid J."/>
            <person name="Sidhu V.K."/>
            <person name="Sieber V."/>
            <person name="Tauch A."/>
            <person name="Watt S.A."/>
            <person name="Weisshaar B."/>
            <person name="Becker A."/>
            <person name="Niehaus K."/>
            <person name="Puehler A."/>
        </authorList>
    </citation>
    <scope>NUCLEOTIDE SEQUENCE [LARGE SCALE GENOMIC DNA]</scope>
    <source>
        <strain>B100</strain>
    </source>
</reference>
<keyword id="KW-0687">Ribonucleoprotein</keyword>
<keyword id="KW-0689">Ribosomal protein</keyword>
<keyword id="KW-0694">RNA-binding</keyword>
<keyword id="KW-0699">rRNA-binding</keyword>
<gene>
    <name evidence="1" type="primary">rpsK</name>
    <name type="ordered locus">xcc-b100_3437</name>
</gene>
<evidence type="ECO:0000255" key="1">
    <source>
        <dbReference type="HAMAP-Rule" id="MF_01310"/>
    </source>
</evidence>
<evidence type="ECO:0000305" key="2"/>
<accession>B0RU60</accession>
<comment type="function">
    <text evidence="1">Located on the platform of the 30S subunit, it bridges several disparate RNA helices of the 16S rRNA. Forms part of the Shine-Dalgarno cleft in the 70S ribosome.</text>
</comment>
<comment type="subunit">
    <text evidence="1">Part of the 30S ribosomal subunit. Interacts with proteins S7 and S18. Binds to IF-3.</text>
</comment>
<comment type="similarity">
    <text evidence="1">Belongs to the universal ribosomal protein uS11 family.</text>
</comment>
<protein>
    <recommendedName>
        <fullName evidence="1">Small ribosomal subunit protein uS11</fullName>
    </recommendedName>
    <alternativeName>
        <fullName evidence="2">30S ribosomal protein S11</fullName>
    </alternativeName>
</protein>
<name>RS11_XANCB</name>
<feature type="chain" id="PRO_1000141158" description="Small ribosomal subunit protein uS11">
    <location>
        <begin position="1"/>
        <end position="130"/>
    </location>
</feature>
<proteinExistence type="inferred from homology"/>
<dbReference type="EMBL" id="AM920689">
    <property type="protein sequence ID" value="CAP52802.1"/>
    <property type="molecule type" value="Genomic_DNA"/>
</dbReference>
<dbReference type="SMR" id="B0RU60"/>
<dbReference type="KEGG" id="xca:xcc-b100_3437"/>
<dbReference type="HOGENOM" id="CLU_072439_5_0_6"/>
<dbReference type="Proteomes" id="UP000001188">
    <property type="component" value="Chromosome"/>
</dbReference>
<dbReference type="GO" id="GO:1990904">
    <property type="term" value="C:ribonucleoprotein complex"/>
    <property type="evidence" value="ECO:0007669"/>
    <property type="project" value="UniProtKB-KW"/>
</dbReference>
<dbReference type="GO" id="GO:0005840">
    <property type="term" value="C:ribosome"/>
    <property type="evidence" value="ECO:0007669"/>
    <property type="project" value="UniProtKB-KW"/>
</dbReference>
<dbReference type="GO" id="GO:0019843">
    <property type="term" value="F:rRNA binding"/>
    <property type="evidence" value="ECO:0007669"/>
    <property type="project" value="UniProtKB-UniRule"/>
</dbReference>
<dbReference type="GO" id="GO:0003735">
    <property type="term" value="F:structural constituent of ribosome"/>
    <property type="evidence" value="ECO:0007669"/>
    <property type="project" value="InterPro"/>
</dbReference>
<dbReference type="GO" id="GO:0006412">
    <property type="term" value="P:translation"/>
    <property type="evidence" value="ECO:0007669"/>
    <property type="project" value="UniProtKB-UniRule"/>
</dbReference>
<dbReference type="FunFam" id="3.30.420.80:FF:000001">
    <property type="entry name" value="30S ribosomal protein S11"/>
    <property type="match status" value="1"/>
</dbReference>
<dbReference type="Gene3D" id="3.30.420.80">
    <property type="entry name" value="Ribosomal protein S11"/>
    <property type="match status" value="1"/>
</dbReference>
<dbReference type="HAMAP" id="MF_01310">
    <property type="entry name" value="Ribosomal_uS11"/>
    <property type="match status" value="1"/>
</dbReference>
<dbReference type="InterPro" id="IPR001971">
    <property type="entry name" value="Ribosomal_uS11"/>
</dbReference>
<dbReference type="InterPro" id="IPR019981">
    <property type="entry name" value="Ribosomal_uS11_bac-type"/>
</dbReference>
<dbReference type="InterPro" id="IPR018102">
    <property type="entry name" value="Ribosomal_uS11_CS"/>
</dbReference>
<dbReference type="InterPro" id="IPR036967">
    <property type="entry name" value="Ribosomal_uS11_sf"/>
</dbReference>
<dbReference type="NCBIfam" id="NF003698">
    <property type="entry name" value="PRK05309.1"/>
    <property type="match status" value="1"/>
</dbReference>
<dbReference type="NCBIfam" id="TIGR03632">
    <property type="entry name" value="uS11_bact"/>
    <property type="match status" value="1"/>
</dbReference>
<dbReference type="PANTHER" id="PTHR11759">
    <property type="entry name" value="40S RIBOSOMAL PROTEIN S14/30S RIBOSOMAL PROTEIN S11"/>
    <property type="match status" value="1"/>
</dbReference>
<dbReference type="Pfam" id="PF00411">
    <property type="entry name" value="Ribosomal_S11"/>
    <property type="match status" value="1"/>
</dbReference>
<dbReference type="PIRSF" id="PIRSF002131">
    <property type="entry name" value="Ribosomal_S11"/>
    <property type="match status" value="1"/>
</dbReference>
<dbReference type="SUPFAM" id="SSF53137">
    <property type="entry name" value="Translational machinery components"/>
    <property type="match status" value="1"/>
</dbReference>
<dbReference type="PROSITE" id="PS00054">
    <property type="entry name" value="RIBOSOMAL_S11"/>
    <property type="match status" value="1"/>
</dbReference>